<comment type="subcellular location">
    <subcellularLocation>
        <location evidence="1">Secreted</location>
    </subcellularLocation>
</comment>
<comment type="similarity">
    <text evidence="1">Belongs to the YebF family.</text>
</comment>
<evidence type="ECO:0000255" key="1">
    <source>
        <dbReference type="HAMAP-Rule" id="MF_01435"/>
    </source>
</evidence>
<evidence type="ECO:0000255" key="2">
    <source>
        <dbReference type="PROSITE-ProRule" id="PRU01323"/>
    </source>
</evidence>
<dbReference type="EMBL" id="CP000886">
    <property type="protein sequence ID" value="ABX66700.1"/>
    <property type="molecule type" value="Genomic_DNA"/>
</dbReference>
<dbReference type="RefSeq" id="WP_001042123.1">
    <property type="nucleotide sequence ID" value="NC_010102.1"/>
</dbReference>
<dbReference type="SMR" id="A9MUZ0"/>
<dbReference type="KEGG" id="spq:SPAB_01288"/>
<dbReference type="PATRIC" id="fig|1016998.12.peg.1215"/>
<dbReference type="HOGENOM" id="CLU_161319_1_0_6"/>
<dbReference type="BioCyc" id="SENT1016998:SPAB_RS05345-MONOMER"/>
<dbReference type="Proteomes" id="UP000008556">
    <property type="component" value="Chromosome"/>
</dbReference>
<dbReference type="GO" id="GO:0005576">
    <property type="term" value="C:extracellular region"/>
    <property type="evidence" value="ECO:0007669"/>
    <property type="project" value="UniProtKB-SubCell"/>
</dbReference>
<dbReference type="Gene3D" id="3.10.450.300">
    <property type="entry name" value="YebF/Colicin-M immunity protein"/>
    <property type="match status" value="1"/>
</dbReference>
<dbReference type="HAMAP" id="MF_01435">
    <property type="entry name" value="YebF"/>
    <property type="match status" value="1"/>
</dbReference>
<dbReference type="InterPro" id="IPR020236">
    <property type="entry name" value="Uncharacterised_YebF"/>
</dbReference>
<dbReference type="InterPro" id="IPR038703">
    <property type="entry name" value="YebF/Cmi_sf"/>
</dbReference>
<dbReference type="InterPro" id="IPR025603">
    <property type="entry name" value="YebF/ColM_immunity"/>
</dbReference>
<dbReference type="NCBIfam" id="NF010224">
    <property type="entry name" value="PRK13680.1"/>
    <property type="match status" value="1"/>
</dbReference>
<dbReference type="NCBIfam" id="NF041240">
    <property type="entry name" value="YebF_not_Cmi"/>
    <property type="match status" value="1"/>
</dbReference>
<dbReference type="Pfam" id="PF13995">
    <property type="entry name" value="YebF"/>
    <property type="match status" value="1"/>
</dbReference>
<dbReference type="PROSITE" id="PS51979">
    <property type="entry name" value="YEBF_CMI"/>
    <property type="match status" value="1"/>
</dbReference>
<protein>
    <recommendedName>
        <fullName evidence="1">Protein YebF</fullName>
    </recommendedName>
</protein>
<feature type="signal peptide" evidence="1">
    <location>
        <begin position="1"/>
        <end position="21"/>
    </location>
</feature>
<feature type="chain" id="PRO_1000087442" description="Protein YebF">
    <location>
        <begin position="22"/>
        <end position="117"/>
    </location>
</feature>
<feature type="domain" description="YebF/Cmi" evidence="2">
    <location>
        <begin position="30"/>
        <end position="117"/>
    </location>
</feature>
<feature type="disulfide bond" evidence="2">
    <location>
        <begin position="34"/>
        <end position="107"/>
    </location>
</feature>
<keyword id="KW-1015">Disulfide bond</keyword>
<keyword id="KW-0964">Secreted</keyword>
<keyword id="KW-0732">Signal</keyword>
<reference key="1">
    <citation type="submission" date="2007-11" db="EMBL/GenBank/DDBJ databases">
        <authorList>
            <consortium name="The Salmonella enterica serovar Paratyphi B Genome Sequencing Project"/>
            <person name="McClelland M."/>
            <person name="Sanderson E.K."/>
            <person name="Porwollik S."/>
            <person name="Spieth J."/>
            <person name="Clifton W.S."/>
            <person name="Fulton R."/>
            <person name="Cordes M."/>
            <person name="Wollam A."/>
            <person name="Shah N."/>
            <person name="Pepin K."/>
            <person name="Bhonagiri V."/>
            <person name="Nash W."/>
            <person name="Johnson M."/>
            <person name="Thiruvilangam P."/>
            <person name="Wilson R."/>
        </authorList>
    </citation>
    <scope>NUCLEOTIDE SEQUENCE [LARGE SCALE GENOMIC DNA]</scope>
    <source>
        <strain>ATCC BAA-1250 / SPB7</strain>
    </source>
</reference>
<sequence length="117" mass="12774">MNKRGALLSLLLLSASVSAFAASTESKSVKFPQCEGLDAAGIAASVKRDYQQNRIVRWADDQKKVGQADPVAWVNVQDVVGQNDKWTVPLTVRGKSADIHYQVIVDCKAGKAEYKPR</sequence>
<name>YEBF_SALPB</name>
<accession>A9MUZ0</accession>
<organism>
    <name type="scientific">Salmonella paratyphi B (strain ATCC BAA-1250 / SPB7)</name>
    <dbReference type="NCBI Taxonomy" id="1016998"/>
    <lineage>
        <taxon>Bacteria</taxon>
        <taxon>Pseudomonadati</taxon>
        <taxon>Pseudomonadota</taxon>
        <taxon>Gammaproteobacteria</taxon>
        <taxon>Enterobacterales</taxon>
        <taxon>Enterobacteriaceae</taxon>
        <taxon>Salmonella</taxon>
    </lineage>
</organism>
<gene>
    <name evidence="1" type="primary">yebF</name>
    <name type="ordered locus">SPAB_01288</name>
</gene>
<proteinExistence type="inferred from homology"/>